<accession>Q8Y208</accession>
<feature type="chain" id="PRO_0000102513" description="Endoribonuclease YbeY">
    <location>
        <begin position="1"/>
        <end position="187"/>
    </location>
</feature>
<feature type="binding site" evidence="1">
    <location>
        <position position="148"/>
    </location>
    <ligand>
        <name>Zn(2+)</name>
        <dbReference type="ChEBI" id="CHEBI:29105"/>
        <note>catalytic</note>
    </ligand>
</feature>
<feature type="binding site" evidence="1">
    <location>
        <position position="152"/>
    </location>
    <ligand>
        <name>Zn(2+)</name>
        <dbReference type="ChEBI" id="CHEBI:29105"/>
        <note>catalytic</note>
    </ligand>
</feature>
<feature type="binding site" evidence="1">
    <location>
        <position position="158"/>
    </location>
    <ligand>
        <name>Zn(2+)</name>
        <dbReference type="ChEBI" id="CHEBI:29105"/>
        <note>catalytic</note>
    </ligand>
</feature>
<comment type="function">
    <text evidence="1">Single strand-specific metallo-endoribonuclease involved in late-stage 70S ribosome quality control and in maturation of the 3' terminus of the 16S rRNA.</text>
</comment>
<comment type="cofactor">
    <cofactor evidence="1">
        <name>Zn(2+)</name>
        <dbReference type="ChEBI" id="CHEBI:29105"/>
    </cofactor>
    <text evidence="1">Binds 1 zinc ion.</text>
</comment>
<comment type="subcellular location">
    <subcellularLocation>
        <location evidence="1">Cytoplasm</location>
    </subcellularLocation>
</comment>
<comment type="similarity">
    <text evidence="1">Belongs to the endoribonuclease YbeY family.</text>
</comment>
<comment type="sequence caution" evidence="2">
    <conflict type="erroneous initiation">
        <sequence resource="EMBL-CDS" id="CAD14057"/>
    </conflict>
</comment>
<reference key="1">
    <citation type="journal article" date="2002" name="Nature">
        <title>Genome sequence of the plant pathogen Ralstonia solanacearum.</title>
        <authorList>
            <person name="Salanoubat M."/>
            <person name="Genin S."/>
            <person name="Artiguenave F."/>
            <person name="Gouzy J."/>
            <person name="Mangenot S."/>
            <person name="Arlat M."/>
            <person name="Billault A."/>
            <person name="Brottier P."/>
            <person name="Camus J.-C."/>
            <person name="Cattolico L."/>
            <person name="Chandler M."/>
            <person name="Choisne N."/>
            <person name="Claudel-Renard C."/>
            <person name="Cunnac S."/>
            <person name="Demange N."/>
            <person name="Gaspin C."/>
            <person name="Lavie M."/>
            <person name="Moisan A."/>
            <person name="Robert C."/>
            <person name="Saurin W."/>
            <person name="Schiex T."/>
            <person name="Siguier P."/>
            <person name="Thebault P."/>
            <person name="Whalen M."/>
            <person name="Wincker P."/>
            <person name="Levy M."/>
            <person name="Weissenbach J."/>
            <person name="Boucher C.A."/>
        </authorList>
    </citation>
    <scope>NUCLEOTIDE SEQUENCE [LARGE SCALE GENOMIC DNA]</scope>
    <source>
        <strain>ATCC BAA-1114 / GMI1000</strain>
    </source>
</reference>
<evidence type="ECO:0000255" key="1">
    <source>
        <dbReference type="HAMAP-Rule" id="MF_00009"/>
    </source>
</evidence>
<evidence type="ECO:0000305" key="2"/>
<keyword id="KW-0963">Cytoplasm</keyword>
<keyword id="KW-0255">Endonuclease</keyword>
<keyword id="KW-0378">Hydrolase</keyword>
<keyword id="KW-0479">Metal-binding</keyword>
<keyword id="KW-0540">Nuclease</keyword>
<keyword id="KW-1185">Reference proteome</keyword>
<keyword id="KW-0690">Ribosome biogenesis</keyword>
<keyword id="KW-0698">rRNA processing</keyword>
<keyword id="KW-0862">Zinc</keyword>
<name>YBEY_RALN1</name>
<proteinExistence type="inferred from homology"/>
<organism>
    <name type="scientific">Ralstonia nicotianae (strain ATCC BAA-1114 / GMI1000)</name>
    <name type="common">Ralstonia solanacearum</name>
    <dbReference type="NCBI Taxonomy" id="267608"/>
    <lineage>
        <taxon>Bacteria</taxon>
        <taxon>Pseudomonadati</taxon>
        <taxon>Pseudomonadota</taxon>
        <taxon>Betaproteobacteria</taxon>
        <taxon>Burkholderiales</taxon>
        <taxon>Burkholderiaceae</taxon>
        <taxon>Ralstonia</taxon>
        <taxon>Ralstonia solanacearum species complex</taxon>
    </lineage>
</organism>
<protein>
    <recommendedName>
        <fullName evidence="1">Endoribonuclease YbeY</fullName>
        <ecNumber evidence="1">3.1.-.-</ecNumber>
    </recommendedName>
</protein>
<sequence>MLALRPEHHDSITLRIEAEPAAEAEDADDALAGAEMLTLDLTVQHGDALKAAARKALPKQKDIEAWIAPALFADAQLNVRFVDEEEGRTLNHTYRGKDYATNVLTFSYAETEDDPVAADIVLCCPVVEQEAKDQGKPLRAHYAHLIVHGALHAQGYDHEDPAQAEEMEGIETEVLAGLGFPDPYADR</sequence>
<dbReference type="EC" id="3.1.-.-" evidence="1"/>
<dbReference type="EMBL" id="AL646052">
    <property type="protein sequence ID" value="CAD14057.1"/>
    <property type="status" value="ALT_INIT"/>
    <property type="molecule type" value="Genomic_DNA"/>
</dbReference>
<dbReference type="SMR" id="Q8Y208"/>
<dbReference type="STRING" id="267608.RSc0529"/>
<dbReference type="EnsemblBacteria" id="CAD14057">
    <property type="protein sequence ID" value="CAD14057"/>
    <property type="gene ID" value="RSc0529"/>
</dbReference>
<dbReference type="KEGG" id="rso:RSc0529"/>
<dbReference type="eggNOG" id="COG0319">
    <property type="taxonomic scope" value="Bacteria"/>
</dbReference>
<dbReference type="HOGENOM" id="CLU_1118710_0_0_4"/>
<dbReference type="Proteomes" id="UP000001436">
    <property type="component" value="Chromosome"/>
</dbReference>
<dbReference type="GO" id="GO:0005737">
    <property type="term" value="C:cytoplasm"/>
    <property type="evidence" value="ECO:0007669"/>
    <property type="project" value="UniProtKB-SubCell"/>
</dbReference>
<dbReference type="GO" id="GO:0004222">
    <property type="term" value="F:metalloendopeptidase activity"/>
    <property type="evidence" value="ECO:0007669"/>
    <property type="project" value="InterPro"/>
</dbReference>
<dbReference type="GO" id="GO:0004521">
    <property type="term" value="F:RNA endonuclease activity"/>
    <property type="evidence" value="ECO:0007669"/>
    <property type="project" value="UniProtKB-UniRule"/>
</dbReference>
<dbReference type="GO" id="GO:0008270">
    <property type="term" value="F:zinc ion binding"/>
    <property type="evidence" value="ECO:0007669"/>
    <property type="project" value="UniProtKB-UniRule"/>
</dbReference>
<dbReference type="GO" id="GO:0006364">
    <property type="term" value="P:rRNA processing"/>
    <property type="evidence" value="ECO:0007669"/>
    <property type="project" value="UniProtKB-UniRule"/>
</dbReference>
<dbReference type="Gene3D" id="3.40.390.30">
    <property type="entry name" value="Metalloproteases ('zincins'), catalytic domain"/>
    <property type="match status" value="1"/>
</dbReference>
<dbReference type="HAMAP" id="MF_00009">
    <property type="entry name" value="Endoribonucl_YbeY"/>
    <property type="match status" value="1"/>
</dbReference>
<dbReference type="InterPro" id="IPR023091">
    <property type="entry name" value="MetalPrtase_cat_dom_sf_prd"/>
</dbReference>
<dbReference type="InterPro" id="IPR002036">
    <property type="entry name" value="YbeY"/>
</dbReference>
<dbReference type="InterPro" id="IPR020549">
    <property type="entry name" value="YbeY_CS"/>
</dbReference>
<dbReference type="NCBIfam" id="NF010570">
    <property type="entry name" value="PRK13963.1"/>
    <property type="match status" value="1"/>
</dbReference>
<dbReference type="NCBIfam" id="TIGR00043">
    <property type="entry name" value="rRNA maturation RNase YbeY"/>
    <property type="match status" value="1"/>
</dbReference>
<dbReference type="PANTHER" id="PTHR46986">
    <property type="entry name" value="ENDORIBONUCLEASE YBEY, CHLOROPLASTIC"/>
    <property type="match status" value="1"/>
</dbReference>
<dbReference type="PANTHER" id="PTHR46986:SF1">
    <property type="entry name" value="ENDORIBONUCLEASE YBEY, CHLOROPLASTIC"/>
    <property type="match status" value="1"/>
</dbReference>
<dbReference type="Pfam" id="PF02130">
    <property type="entry name" value="YbeY"/>
    <property type="match status" value="1"/>
</dbReference>
<dbReference type="SUPFAM" id="SSF55486">
    <property type="entry name" value="Metalloproteases ('zincins'), catalytic domain"/>
    <property type="match status" value="1"/>
</dbReference>
<dbReference type="PROSITE" id="PS01306">
    <property type="entry name" value="UPF0054"/>
    <property type="match status" value="1"/>
</dbReference>
<gene>
    <name evidence="1" type="primary">ybeY</name>
    <name type="ordered locus">RSc0529</name>
    <name type="ORF">RS04939</name>
</gene>